<name>RIBBA_STAHJ</name>
<sequence length="393" mass="43703">MEFDEIKDALNALKRGESIIVVDDEDRENEGDLVAITQWMNDNTINFMAKEGRGLICAPISKDLALKFNLMPMVEHNTDGFGTNFTVSIDHATTSTGISAFDRMATARALINPESTPEDFHKPGHLFPLIAKENGVLERTGHTEAAVDLAKLTKAAPAGVICEIMNEDGTMAKGEQLEAFKHQHGLKMITIESLVNYQKDKDTSVELKAKVNMPTDHGAFEMYGFESSLTKEEIVVLAKGEPRVTENVRIHSACLTGDIFHSQRCDCGAQLESAMKYINEHGGMIIYLPQEGRGIGLINKLRAYELIEQGHDTVTANLALGFDEDLRDYHIAAQILNYFNVQQVNLLSNNPKKFEGLSEYGIKVADRTPIIVAENEHNHDYMNTKKIKMGHLI</sequence>
<protein>
    <recommendedName>
        <fullName evidence="1">Riboflavin biosynthesis protein RibBA</fullName>
    </recommendedName>
    <domain>
        <recommendedName>
            <fullName evidence="1">3,4-dihydroxy-2-butanone 4-phosphate synthase</fullName>
            <shortName evidence="1">DHBP synthase</shortName>
            <ecNumber evidence="1">4.1.99.12</ecNumber>
        </recommendedName>
    </domain>
    <domain>
        <recommendedName>
            <fullName evidence="1">GTP cyclohydrolase-2</fullName>
            <ecNumber evidence="1">3.5.4.25</ecNumber>
        </recommendedName>
        <alternativeName>
            <fullName evidence="1">GTP cyclohydrolase II</fullName>
        </alternativeName>
    </domain>
</protein>
<evidence type="ECO:0000255" key="1">
    <source>
        <dbReference type="HAMAP-Rule" id="MF_01283"/>
    </source>
</evidence>
<keyword id="KW-0342">GTP-binding</keyword>
<keyword id="KW-0378">Hydrolase</keyword>
<keyword id="KW-0456">Lyase</keyword>
<keyword id="KW-0460">Magnesium</keyword>
<keyword id="KW-0464">Manganese</keyword>
<keyword id="KW-0479">Metal-binding</keyword>
<keyword id="KW-0511">Multifunctional enzyme</keyword>
<keyword id="KW-0547">Nucleotide-binding</keyword>
<keyword id="KW-0686">Riboflavin biosynthesis</keyword>
<keyword id="KW-0862">Zinc</keyword>
<dbReference type="EC" id="4.1.99.12" evidence="1"/>
<dbReference type="EC" id="3.5.4.25" evidence="1"/>
<dbReference type="EMBL" id="AP006716">
    <property type="protein sequence ID" value="BAE04464.1"/>
    <property type="molecule type" value="Genomic_DNA"/>
</dbReference>
<dbReference type="SMR" id="Q4L7B1"/>
<dbReference type="KEGG" id="sha:SH1155"/>
<dbReference type="eggNOG" id="COG0108">
    <property type="taxonomic scope" value="Bacteria"/>
</dbReference>
<dbReference type="eggNOG" id="COG0807">
    <property type="taxonomic scope" value="Bacteria"/>
</dbReference>
<dbReference type="HOGENOM" id="CLU_020273_1_2_9"/>
<dbReference type="OrthoDB" id="9793111at2"/>
<dbReference type="UniPathway" id="UPA00275">
    <property type="reaction ID" value="UER00399"/>
</dbReference>
<dbReference type="UniPathway" id="UPA00275">
    <property type="reaction ID" value="UER00400"/>
</dbReference>
<dbReference type="Proteomes" id="UP000000543">
    <property type="component" value="Chromosome"/>
</dbReference>
<dbReference type="GO" id="GO:0005829">
    <property type="term" value="C:cytosol"/>
    <property type="evidence" value="ECO:0007669"/>
    <property type="project" value="TreeGrafter"/>
</dbReference>
<dbReference type="GO" id="GO:0008686">
    <property type="term" value="F:3,4-dihydroxy-2-butanone-4-phosphate synthase activity"/>
    <property type="evidence" value="ECO:0007669"/>
    <property type="project" value="UniProtKB-UniRule"/>
</dbReference>
<dbReference type="GO" id="GO:0005525">
    <property type="term" value="F:GTP binding"/>
    <property type="evidence" value="ECO:0007669"/>
    <property type="project" value="UniProtKB-KW"/>
</dbReference>
<dbReference type="GO" id="GO:0003935">
    <property type="term" value="F:GTP cyclohydrolase II activity"/>
    <property type="evidence" value="ECO:0007669"/>
    <property type="project" value="UniProtKB-UniRule"/>
</dbReference>
<dbReference type="GO" id="GO:0000287">
    <property type="term" value="F:magnesium ion binding"/>
    <property type="evidence" value="ECO:0007669"/>
    <property type="project" value="UniProtKB-UniRule"/>
</dbReference>
<dbReference type="GO" id="GO:0030145">
    <property type="term" value="F:manganese ion binding"/>
    <property type="evidence" value="ECO:0007669"/>
    <property type="project" value="UniProtKB-UniRule"/>
</dbReference>
<dbReference type="GO" id="GO:0008270">
    <property type="term" value="F:zinc ion binding"/>
    <property type="evidence" value="ECO:0007669"/>
    <property type="project" value="UniProtKB-UniRule"/>
</dbReference>
<dbReference type="GO" id="GO:0009231">
    <property type="term" value="P:riboflavin biosynthetic process"/>
    <property type="evidence" value="ECO:0007669"/>
    <property type="project" value="UniProtKB-UniRule"/>
</dbReference>
<dbReference type="CDD" id="cd00641">
    <property type="entry name" value="GTP_cyclohydro2"/>
    <property type="match status" value="1"/>
</dbReference>
<dbReference type="FunFam" id="3.40.50.10990:FF:000002">
    <property type="entry name" value="GTP cyclohydrolase-2"/>
    <property type="match status" value="1"/>
</dbReference>
<dbReference type="FunFam" id="3.90.870.10:FF:000001">
    <property type="entry name" value="Riboflavin biosynthesis protein RibBA"/>
    <property type="match status" value="1"/>
</dbReference>
<dbReference type="Gene3D" id="3.90.870.10">
    <property type="entry name" value="DHBP synthase"/>
    <property type="match status" value="1"/>
</dbReference>
<dbReference type="Gene3D" id="3.40.50.10990">
    <property type="entry name" value="GTP cyclohydrolase II"/>
    <property type="match status" value="1"/>
</dbReference>
<dbReference type="HAMAP" id="MF_00179">
    <property type="entry name" value="RibA"/>
    <property type="match status" value="1"/>
</dbReference>
<dbReference type="HAMAP" id="MF_00180">
    <property type="entry name" value="RibB"/>
    <property type="match status" value="1"/>
</dbReference>
<dbReference type="HAMAP" id="MF_01283">
    <property type="entry name" value="RibBA"/>
    <property type="match status" value="1"/>
</dbReference>
<dbReference type="InterPro" id="IPR017945">
    <property type="entry name" value="DHBP_synth_RibB-like_a/b_dom"/>
</dbReference>
<dbReference type="InterPro" id="IPR000422">
    <property type="entry name" value="DHBP_synthase_RibB"/>
</dbReference>
<dbReference type="InterPro" id="IPR032677">
    <property type="entry name" value="GTP_cyclohydro_II"/>
</dbReference>
<dbReference type="InterPro" id="IPR000926">
    <property type="entry name" value="RibA"/>
</dbReference>
<dbReference type="InterPro" id="IPR036144">
    <property type="entry name" value="RibA-like_sf"/>
</dbReference>
<dbReference type="InterPro" id="IPR016299">
    <property type="entry name" value="Riboflavin_synth_RibBA"/>
</dbReference>
<dbReference type="NCBIfam" id="NF001591">
    <property type="entry name" value="PRK00393.1"/>
    <property type="match status" value="1"/>
</dbReference>
<dbReference type="NCBIfam" id="TIGR00505">
    <property type="entry name" value="ribA"/>
    <property type="match status" value="1"/>
</dbReference>
<dbReference type="NCBIfam" id="TIGR00506">
    <property type="entry name" value="ribB"/>
    <property type="match status" value="1"/>
</dbReference>
<dbReference type="PANTHER" id="PTHR21327:SF18">
    <property type="entry name" value="3,4-DIHYDROXY-2-BUTANONE 4-PHOSPHATE SYNTHASE"/>
    <property type="match status" value="1"/>
</dbReference>
<dbReference type="PANTHER" id="PTHR21327">
    <property type="entry name" value="GTP CYCLOHYDROLASE II-RELATED"/>
    <property type="match status" value="1"/>
</dbReference>
<dbReference type="Pfam" id="PF00926">
    <property type="entry name" value="DHBP_synthase"/>
    <property type="match status" value="1"/>
</dbReference>
<dbReference type="Pfam" id="PF00925">
    <property type="entry name" value="GTP_cyclohydro2"/>
    <property type="match status" value="1"/>
</dbReference>
<dbReference type="PIRSF" id="PIRSF001259">
    <property type="entry name" value="RibA"/>
    <property type="match status" value="1"/>
</dbReference>
<dbReference type="SUPFAM" id="SSF142695">
    <property type="entry name" value="RibA-like"/>
    <property type="match status" value="1"/>
</dbReference>
<dbReference type="SUPFAM" id="SSF55821">
    <property type="entry name" value="YrdC/RibB"/>
    <property type="match status" value="1"/>
</dbReference>
<accession>Q4L7B1</accession>
<feature type="chain" id="PRO_0000151741" description="Riboflavin biosynthesis protein RibBA">
    <location>
        <begin position="1"/>
        <end position="393"/>
    </location>
</feature>
<feature type="region of interest" description="DHBP synthase">
    <location>
        <begin position="1"/>
        <end position="200"/>
    </location>
</feature>
<feature type="region of interest" description="GTP cyclohydrolase II">
    <location>
        <begin position="201"/>
        <end position="393"/>
    </location>
</feature>
<feature type="active site" description="Proton acceptor; for GTP cyclohydrolase activity" evidence="1">
    <location>
        <position position="325"/>
    </location>
</feature>
<feature type="active site" description="Nucleophile; for GTP cyclohydrolase activity" evidence="1">
    <location>
        <position position="327"/>
    </location>
</feature>
<feature type="binding site" evidence="1">
    <location>
        <begin position="27"/>
        <end position="28"/>
    </location>
    <ligand>
        <name>D-ribulose 5-phosphate</name>
        <dbReference type="ChEBI" id="CHEBI:58121"/>
    </ligand>
</feature>
<feature type="binding site" evidence="1">
    <location>
        <position position="28"/>
    </location>
    <ligand>
        <name>Mg(2+)</name>
        <dbReference type="ChEBI" id="CHEBI:18420"/>
        <label>1</label>
    </ligand>
</feature>
<feature type="binding site" evidence="1">
    <location>
        <position position="28"/>
    </location>
    <ligand>
        <name>Mg(2+)</name>
        <dbReference type="ChEBI" id="CHEBI:18420"/>
        <label>2</label>
    </ligand>
</feature>
<feature type="binding site" evidence="1">
    <location>
        <position position="32"/>
    </location>
    <ligand>
        <name>D-ribulose 5-phosphate</name>
        <dbReference type="ChEBI" id="CHEBI:58121"/>
    </ligand>
</feature>
<feature type="binding site" evidence="1">
    <location>
        <begin position="139"/>
        <end position="143"/>
    </location>
    <ligand>
        <name>D-ribulose 5-phosphate</name>
        <dbReference type="ChEBI" id="CHEBI:58121"/>
    </ligand>
</feature>
<feature type="binding site" evidence="1">
    <location>
        <position position="142"/>
    </location>
    <ligand>
        <name>Mg(2+)</name>
        <dbReference type="ChEBI" id="CHEBI:18420"/>
        <label>2</label>
    </ligand>
</feature>
<feature type="binding site" evidence="1">
    <location>
        <position position="163"/>
    </location>
    <ligand>
        <name>D-ribulose 5-phosphate</name>
        <dbReference type="ChEBI" id="CHEBI:58121"/>
    </ligand>
</feature>
<feature type="binding site" evidence="1">
    <location>
        <begin position="249"/>
        <end position="253"/>
    </location>
    <ligand>
        <name>GTP</name>
        <dbReference type="ChEBI" id="CHEBI:37565"/>
    </ligand>
</feature>
<feature type="binding site" evidence="1">
    <location>
        <position position="254"/>
    </location>
    <ligand>
        <name>Zn(2+)</name>
        <dbReference type="ChEBI" id="CHEBI:29105"/>
        <note>catalytic</note>
    </ligand>
</feature>
<feature type="binding site" evidence="1">
    <location>
        <position position="265"/>
    </location>
    <ligand>
        <name>Zn(2+)</name>
        <dbReference type="ChEBI" id="CHEBI:29105"/>
        <note>catalytic</note>
    </ligand>
</feature>
<feature type="binding site" evidence="1">
    <location>
        <position position="267"/>
    </location>
    <ligand>
        <name>Zn(2+)</name>
        <dbReference type="ChEBI" id="CHEBI:29105"/>
        <note>catalytic</note>
    </ligand>
</feature>
<feature type="binding site" evidence="1">
    <location>
        <position position="270"/>
    </location>
    <ligand>
        <name>GTP</name>
        <dbReference type="ChEBI" id="CHEBI:37565"/>
    </ligand>
</feature>
<feature type="binding site" evidence="1">
    <location>
        <begin position="291"/>
        <end position="293"/>
    </location>
    <ligand>
        <name>GTP</name>
        <dbReference type="ChEBI" id="CHEBI:37565"/>
    </ligand>
</feature>
<feature type="binding site" evidence="1">
    <location>
        <position position="313"/>
    </location>
    <ligand>
        <name>GTP</name>
        <dbReference type="ChEBI" id="CHEBI:37565"/>
    </ligand>
</feature>
<feature type="binding site" evidence="1">
    <location>
        <position position="348"/>
    </location>
    <ligand>
        <name>GTP</name>
        <dbReference type="ChEBI" id="CHEBI:37565"/>
    </ligand>
</feature>
<feature type="binding site" evidence="1">
    <location>
        <position position="353"/>
    </location>
    <ligand>
        <name>GTP</name>
        <dbReference type="ChEBI" id="CHEBI:37565"/>
    </ligand>
</feature>
<feature type="site" description="Essential for DHBP synthase activity" evidence="1">
    <location>
        <position position="125"/>
    </location>
</feature>
<feature type="site" description="Essential for DHBP synthase activity" evidence="1">
    <location>
        <position position="163"/>
    </location>
</feature>
<organism>
    <name type="scientific">Staphylococcus haemolyticus (strain JCSC1435)</name>
    <dbReference type="NCBI Taxonomy" id="279808"/>
    <lineage>
        <taxon>Bacteria</taxon>
        <taxon>Bacillati</taxon>
        <taxon>Bacillota</taxon>
        <taxon>Bacilli</taxon>
        <taxon>Bacillales</taxon>
        <taxon>Staphylococcaceae</taxon>
        <taxon>Staphylococcus</taxon>
    </lineage>
</organism>
<reference key="1">
    <citation type="journal article" date="2005" name="J. Bacteriol.">
        <title>Whole-genome sequencing of Staphylococcus haemolyticus uncovers the extreme plasticity of its genome and the evolution of human-colonizing staphylococcal species.</title>
        <authorList>
            <person name="Takeuchi F."/>
            <person name="Watanabe S."/>
            <person name="Baba T."/>
            <person name="Yuzawa H."/>
            <person name="Ito T."/>
            <person name="Morimoto Y."/>
            <person name="Kuroda M."/>
            <person name="Cui L."/>
            <person name="Takahashi M."/>
            <person name="Ankai A."/>
            <person name="Baba S."/>
            <person name="Fukui S."/>
            <person name="Lee J.C."/>
            <person name="Hiramatsu K."/>
        </authorList>
    </citation>
    <scope>NUCLEOTIDE SEQUENCE [LARGE SCALE GENOMIC DNA]</scope>
    <source>
        <strain>JCSC1435</strain>
    </source>
</reference>
<gene>
    <name evidence="1" type="primary">ribBA</name>
    <name type="synonym">ribA</name>
    <name type="ordered locus">SH1155</name>
</gene>
<proteinExistence type="inferred from homology"/>
<comment type="function">
    <text evidence="1">Catalyzes the conversion of D-ribulose 5-phosphate to formate and 3,4-dihydroxy-2-butanone 4-phosphate.</text>
</comment>
<comment type="function">
    <text evidence="1">Catalyzes the conversion of GTP to 2,5-diamino-6-ribosylamino-4(3H)-pyrimidinone 5'-phosphate (DARP), formate and pyrophosphate.</text>
</comment>
<comment type="catalytic activity">
    <reaction evidence="1">
        <text>D-ribulose 5-phosphate = (2S)-2-hydroxy-3-oxobutyl phosphate + formate + H(+)</text>
        <dbReference type="Rhea" id="RHEA:18457"/>
        <dbReference type="ChEBI" id="CHEBI:15378"/>
        <dbReference type="ChEBI" id="CHEBI:15740"/>
        <dbReference type="ChEBI" id="CHEBI:58121"/>
        <dbReference type="ChEBI" id="CHEBI:58830"/>
        <dbReference type="EC" id="4.1.99.12"/>
    </reaction>
</comment>
<comment type="catalytic activity">
    <reaction evidence="1">
        <text>GTP + 4 H2O = 2,5-diamino-6-hydroxy-4-(5-phosphoribosylamino)-pyrimidine + formate + 2 phosphate + 3 H(+)</text>
        <dbReference type="Rhea" id="RHEA:23704"/>
        <dbReference type="ChEBI" id="CHEBI:15377"/>
        <dbReference type="ChEBI" id="CHEBI:15378"/>
        <dbReference type="ChEBI" id="CHEBI:15740"/>
        <dbReference type="ChEBI" id="CHEBI:37565"/>
        <dbReference type="ChEBI" id="CHEBI:43474"/>
        <dbReference type="ChEBI" id="CHEBI:58614"/>
        <dbReference type="EC" id="3.5.4.25"/>
    </reaction>
</comment>
<comment type="cofactor">
    <cofactor evidence="1">
        <name>Mg(2+)</name>
        <dbReference type="ChEBI" id="CHEBI:18420"/>
    </cofactor>
    <cofactor evidence="1">
        <name>Mn(2+)</name>
        <dbReference type="ChEBI" id="CHEBI:29035"/>
    </cofactor>
    <text evidence="1">Binds 2 divalent metal cations per subunit. Magnesium or manganese.</text>
</comment>
<comment type="cofactor">
    <cofactor evidence="1">
        <name>Zn(2+)</name>
        <dbReference type="ChEBI" id="CHEBI:29105"/>
    </cofactor>
    <text evidence="1">Binds 1 zinc ion per subunit.</text>
</comment>
<comment type="pathway">
    <text evidence="1">Cofactor biosynthesis; riboflavin biosynthesis; 2-hydroxy-3-oxobutyl phosphate from D-ribulose 5-phosphate: step 1/1.</text>
</comment>
<comment type="pathway">
    <text evidence="1">Cofactor biosynthesis; riboflavin biosynthesis; 5-amino-6-(D-ribitylamino)uracil from GTP: step 1/4.</text>
</comment>
<comment type="similarity">
    <text evidence="1">In the N-terminal section; belongs to the DHBP synthase family.</text>
</comment>
<comment type="similarity">
    <text evidence="1">In the C-terminal section; belongs to the GTP cyclohydrolase II family.</text>
</comment>